<comment type="function">
    <text evidence="1">This protein binds to the 23S rRNA, and is important in its secondary structure. It is located near the subunit interface in the base of the L7/L12 stalk, and near the tRNA binding site of the peptidyltransferase center.</text>
</comment>
<comment type="subunit">
    <text evidence="1">Part of the 50S ribosomal subunit.</text>
</comment>
<comment type="similarity">
    <text evidence="1">Belongs to the universal ribosomal protein uL6 family.</text>
</comment>
<feature type="chain" id="PRO_0000131043" description="Large ribosomal subunit protein uL6">
    <location>
        <begin position="1"/>
        <end position="179"/>
    </location>
</feature>
<dbReference type="EMBL" id="AE016826">
    <property type="protein sequence ID" value="AAO27158.1"/>
    <property type="molecule type" value="Genomic_DNA"/>
</dbReference>
<dbReference type="RefSeq" id="WP_011091559.1">
    <property type="nucleotide sequence ID" value="NC_004545.1"/>
</dbReference>
<dbReference type="SMR" id="Q89A80"/>
<dbReference type="STRING" id="224915.bbp_452"/>
<dbReference type="KEGG" id="bab:bbp_452"/>
<dbReference type="eggNOG" id="COG0097">
    <property type="taxonomic scope" value="Bacteria"/>
</dbReference>
<dbReference type="HOGENOM" id="CLU_065464_1_2_6"/>
<dbReference type="OrthoDB" id="9805007at2"/>
<dbReference type="Proteomes" id="UP000000601">
    <property type="component" value="Chromosome"/>
</dbReference>
<dbReference type="GO" id="GO:0022625">
    <property type="term" value="C:cytosolic large ribosomal subunit"/>
    <property type="evidence" value="ECO:0007669"/>
    <property type="project" value="TreeGrafter"/>
</dbReference>
<dbReference type="GO" id="GO:0019843">
    <property type="term" value="F:rRNA binding"/>
    <property type="evidence" value="ECO:0007669"/>
    <property type="project" value="UniProtKB-UniRule"/>
</dbReference>
<dbReference type="GO" id="GO:0003735">
    <property type="term" value="F:structural constituent of ribosome"/>
    <property type="evidence" value="ECO:0007669"/>
    <property type="project" value="InterPro"/>
</dbReference>
<dbReference type="GO" id="GO:0002181">
    <property type="term" value="P:cytoplasmic translation"/>
    <property type="evidence" value="ECO:0007669"/>
    <property type="project" value="TreeGrafter"/>
</dbReference>
<dbReference type="Gene3D" id="3.90.930.12">
    <property type="entry name" value="Ribosomal protein L6, alpha-beta domain"/>
    <property type="match status" value="2"/>
</dbReference>
<dbReference type="HAMAP" id="MF_01365_B">
    <property type="entry name" value="Ribosomal_uL6_B"/>
    <property type="match status" value="1"/>
</dbReference>
<dbReference type="InterPro" id="IPR000702">
    <property type="entry name" value="Ribosomal_uL6-like"/>
</dbReference>
<dbReference type="InterPro" id="IPR036789">
    <property type="entry name" value="Ribosomal_uL6-like_a/b-dom_sf"/>
</dbReference>
<dbReference type="InterPro" id="IPR020040">
    <property type="entry name" value="Ribosomal_uL6_a/b-dom"/>
</dbReference>
<dbReference type="InterPro" id="IPR019906">
    <property type="entry name" value="Ribosomal_uL6_bac-type"/>
</dbReference>
<dbReference type="InterPro" id="IPR002358">
    <property type="entry name" value="Ribosomal_uL6_CS"/>
</dbReference>
<dbReference type="NCBIfam" id="TIGR03654">
    <property type="entry name" value="L6_bact"/>
    <property type="match status" value="1"/>
</dbReference>
<dbReference type="PANTHER" id="PTHR11655">
    <property type="entry name" value="60S/50S RIBOSOMAL PROTEIN L6/L9"/>
    <property type="match status" value="1"/>
</dbReference>
<dbReference type="PANTHER" id="PTHR11655:SF14">
    <property type="entry name" value="LARGE RIBOSOMAL SUBUNIT PROTEIN UL6M"/>
    <property type="match status" value="1"/>
</dbReference>
<dbReference type="Pfam" id="PF00347">
    <property type="entry name" value="Ribosomal_L6"/>
    <property type="match status" value="2"/>
</dbReference>
<dbReference type="PIRSF" id="PIRSF002162">
    <property type="entry name" value="Ribosomal_L6"/>
    <property type="match status" value="1"/>
</dbReference>
<dbReference type="PRINTS" id="PR00059">
    <property type="entry name" value="RIBOSOMALL6"/>
</dbReference>
<dbReference type="SUPFAM" id="SSF56053">
    <property type="entry name" value="Ribosomal protein L6"/>
    <property type="match status" value="2"/>
</dbReference>
<dbReference type="PROSITE" id="PS00525">
    <property type="entry name" value="RIBOSOMAL_L6_1"/>
    <property type="match status" value="1"/>
</dbReference>
<sequence length="179" mass="19710">MSRIAKQPIVIPSDVSITLIGQMVIVKGSKGELKRLIHDSVLVKSVKSCLVFSSRINSSVKGWAQAGTARSLVNSMIHGVTVGFFKKLKLFGVGYRISINSSKNLNMSLGYSHIIEYVLPFGIFVESISQAEIIVKGINKQLVGQVAANLRAYRKSEPYKGKGIRYSNEIVRVKEAKKK</sequence>
<proteinExistence type="inferred from homology"/>
<organism>
    <name type="scientific">Buchnera aphidicola subsp. Baizongia pistaciae (strain Bp)</name>
    <dbReference type="NCBI Taxonomy" id="224915"/>
    <lineage>
        <taxon>Bacteria</taxon>
        <taxon>Pseudomonadati</taxon>
        <taxon>Pseudomonadota</taxon>
        <taxon>Gammaproteobacteria</taxon>
        <taxon>Enterobacterales</taxon>
        <taxon>Erwiniaceae</taxon>
        <taxon>Buchnera</taxon>
    </lineage>
</organism>
<keyword id="KW-1185">Reference proteome</keyword>
<keyword id="KW-0687">Ribonucleoprotein</keyword>
<keyword id="KW-0689">Ribosomal protein</keyword>
<keyword id="KW-0694">RNA-binding</keyword>
<keyword id="KW-0699">rRNA-binding</keyword>
<gene>
    <name evidence="1" type="primary">rplF</name>
    <name type="ordered locus">bbp_452</name>
</gene>
<accession>Q89A80</accession>
<evidence type="ECO:0000255" key="1">
    <source>
        <dbReference type="HAMAP-Rule" id="MF_01365"/>
    </source>
</evidence>
<evidence type="ECO:0000305" key="2"/>
<name>RL6_BUCBP</name>
<reference key="1">
    <citation type="journal article" date="2003" name="Proc. Natl. Acad. Sci. U.S.A.">
        <title>Reductive genome evolution in Buchnera aphidicola.</title>
        <authorList>
            <person name="van Ham R.C.H.J."/>
            <person name="Kamerbeek J."/>
            <person name="Palacios C."/>
            <person name="Rausell C."/>
            <person name="Abascal F."/>
            <person name="Bastolla U."/>
            <person name="Fernandez J.M."/>
            <person name="Jimenez L."/>
            <person name="Postigo M."/>
            <person name="Silva F.J."/>
            <person name="Tamames J."/>
            <person name="Viguera E."/>
            <person name="Latorre A."/>
            <person name="Valencia A."/>
            <person name="Moran F."/>
            <person name="Moya A."/>
        </authorList>
    </citation>
    <scope>NUCLEOTIDE SEQUENCE [LARGE SCALE GENOMIC DNA]</scope>
    <source>
        <strain>Bp</strain>
    </source>
</reference>
<protein>
    <recommendedName>
        <fullName evidence="1">Large ribosomal subunit protein uL6</fullName>
    </recommendedName>
    <alternativeName>
        <fullName evidence="2">50S ribosomal protein L6</fullName>
    </alternativeName>
</protein>